<protein>
    <recommendedName>
        <fullName evidence="1">Trigger factor</fullName>
        <shortName evidence="1">TF</shortName>
        <ecNumber evidence="1">5.2.1.8</ecNumber>
    </recommendedName>
    <alternativeName>
        <fullName evidence="1">PPIase</fullName>
    </alternativeName>
</protein>
<keyword id="KW-0131">Cell cycle</keyword>
<keyword id="KW-0132">Cell division</keyword>
<keyword id="KW-0143">Chaperone</keyword>
<keyword id="KW-0963">Cytoplasm</keyword>
<keyword id="KW-0413">Isomerase</keyword>
<keyword id="KW-1185">Reference proteome</keyword>
<keyword id="KW-0697">Rotamase</keyword>
<gene>
    <name evidence="1" type="primary">tig</name>
    <name type="ordered locus">TTHA0614</name>
</gene>
<feature type="chain" id="PRO_0000256638" description="Trigger factor">
    <location>
        <begin position="1"/>
        <end position="404"/>
    </location>
</feature>
<feature type="domain" description="PPIase FKBP-type" evidence="1">
    <location>
        <begin position="160"/>
        <end position="225"/>
    </location>
</feature>
<comment type="function">
    <text evidence="1">Involved in protein export. Acts as a chaperone by maintaining the newly synthesized protein in an open conformation. Functions as a peptidyl-prolyl cis-trans isomerase.</text>
</comment>
<comment type="catalytic activity">
    <reaction evidence="1">
        <text>[protein]-peptidylproline (omega=180) = [protein]-peptidylproline (omega=0)</text>
        <dbReference type="Rhea" id="RHEA:16237"/>
        <dbReference type="Rhea" id="RHEA-COMP:10747"/>
        <dbReference type="Rhea" id="RHEA-COMP:10748"/>
        <dbReference type="ChEBI" id="CHEBI:83833"/>
        <dbReference type="ChEBI" id="CHEBI:83834"/>
        <dbReference type="EC" id="5.2.1.8"/>
    </reaction>
</comment>
<comment type="subcellular location">
    <subcellularLocation>
        <location>Cytoplasm</location>
    </subcellularLocation>
    <text evidence="1">About half TF is bound to the ribosome near the polypeptide exit tunnel while the other half is free in the cytoplasm.</text>
</comment>
<comment type="domain">
    <text evidence="1">Consists of 3 domains; the N-terminus binds the ribosome, the middle domain has PPIase activity, while the C-terminus has intrinsic chaperone activity on its own.</text>
</comment>
<comment type="similarity">
    <text evidence="1">Belongs to the FKBP-type PPIase family. Tig subfamily.</text>
</comment>
<evidence type="ECO:0000255" key="1">
    <source>
        <dbReference type="HAMAP-Rule" id="MF_00303"/>
    </source>
</evidence>
<organism>
    <name type="scientific">Thermus thermophilus (strain ATCC 27634 / DSM 579 / HB8)</name>
    <dbReference type="NCBI Taxonomy" id="300852"/>
    <lineage>
        <taxon>Bacteria</taxon>
        <taxon>Thermotogati</taxon>
        <taxon>Deinococcota</taxon>
        <taxon>Deinococci</taxon>
        <taxon>Thermales</taxon>
        <taxon>Thermaceae</taxon>
        <taxon>Thermus</taxon>
    </lineage>
</organism>
<accession>Q5SKM9</accession>
<reference key="1">
    <citation type="submission" date="2004-11" db="EMBL/GenBank/DDBJ databases">
        <title>Complete genome sequence of Thermus thermophilus HB8.</title>
        <authorList>
            <person name="Masui R."/>
            <person name="Kurokawa K."/>
            <person name="Nakagawa N."/>
            <person name="Tokunaga F."/>
            <person name="Koyama Y."/>
            <person name="Shibata T."/>
            <person name="Oshima T."/>
            <person name="Yokoyama S."/>
            <person name="Yasunaga T."/>
            <person name="Kuramitsu S."/>
        </authorList>
    </citation>
    <scope>NUCLEOTIDE SEQUENCE [LARGE SCALE GENOMIC DNA]</scope>
    <source>
        <strain>ATCC 27634 / DSM 579 / HB8</strain>
    </source>
</reference>
<sequence>MAEILERSGYLVKVRVEVPADRVKASYEALLKDLASRVRVPGFRPGKAPLKVVEARLGREALLQDLKERLVEETYPEAVRELGLSPVAARVVEQDLSEGEGFRYVAEVENYPEVRLPDWRSFALEVSPPEVTEEMVEKALEELRQRYAELVPVEREAQEKDHLFVRTEEGAEFPIDLAKALPHVREALLGKKAGDVVMVPVLNDKGEKVREVRTEVLEVKTLKLPELDEEFAKTLEAESLEDLKNRVRESLKRQAERAYEEARERAFLEKLAEGLEVEIPPSMLRAEERHLLEHLAEDLYRQGISLEAYLEALKEKGELEKFQEDLRKEAEKRVRIALAREKLAEELNPEVSEEEWQAYLQAAARAYGVAVQDLRRQFGEEGLARLKERLRQDKAVQEALKALG</sequence>
<name>TIG_THET8</name>
<dbReference type="EC" id="5.2.1.8" evidence="1"/>
<dbReference type="EMBL" id="AP008226">
    <property type="protein sequence ID" value="BAD70437.1"/>
    <property type="molecule type" value="Genomic_DNA"/>
</dbReference>
<dbReference type="RefSeq" id="WP_011228070.1">
    <property type="nucleotide sequence ID" value="NC_006461.1"/>
</dbReference>
<dbReference type="RefSeq" id="YP_143880.1">
    <property type="nucleotide sequence ID" value="NC_006461.1"/>
</dbReference>
<dbReference type="SMR" id="Q5SKM9"/>
<dbReference type="EnsemblBacteria" id="BAD70437">
    <property type="protein sequence ID" value="BAD70437"/>
    <property type="gene ID" value="BAD70437"/>
</dbReference>
<dbReference type="GeneID" id="3169214"/>
<dbReference type="KEGG" id="ttj:TTHA0614"/>
<dbReference type="PATRIC" id="fig|300852.9.peg.612"/>
<dbReference type="eggNOG" id="COG0544">
    <property type="taxonomic scope" value="Bacteria"/>
</dbReference>
<dbReference type="HOGENOM" id="CLU_033058_3_1_0"/>
<dbReference type="PhylomeDB" id="Q5SKM9"/>
<dbReference type="Proteomes" id="UP000000532">
    <property type="component" value="Chromosome"/>
</dbReference>
<dbReference type="GO" id="GO:0005737">
    <property type="term" value="C:cytoplasm"/>
    <property type="evidence" value="ECO:0007669"/>
    <property type="project" value="UniProtKB-SubCell"/>
</dbReference>
<dbReference type="GO" id="GO:0003755">
    <property type="term" value="F:peptidyl-prolyl cis-trans isomerase activity"/>
    <property type="evidence" value="ECO:0007669"/>
    <property type="project" value="UniProtKB-UniRule"/>
</dbReference>
<dbReference type="GO" id="GO:0044183">
    <property type="term" value="F:protein folding chaperone"/>
    <property type="evidence" value="ECO:0007669"/>
    <property type="project" value="TreeGrafter"/>
</dbReference>
<dbReference type="GO" id="GO:0043022">
    <property type="term" value="F:ribosome binding"/>
    <property type="evidence" value="ECO:0007669"/>
    <property type="project" value="TreeGrafter"/>
</dbReference>
<dbReference type="GO" id="GO:0051083">
    <property type="term" value="P:'de novo' cotranslational protein folding"/>
    <property type="evidence" value="ECO:0007669"/>
    <property type="project" value="TreeGrafter"/>
</dbReference>
<dbReference type="GO" id="GO:0051301">
    <property type="term" value="P:cell division"/>
    <property type="evidence" value="ECO:0007669"/>
    <property type="project" value="UniProtKB-KW"/>
</dbReference>
<dbReference type="GO" id="GO:0061077">
    <property type="term" value="P:chaperone-mediated protein folding"/>
    <property type="evidence" value="ECO:0007669"/>
    <property type="project" value="TreeGrafter"/>
</dbReference>
<dbReference type="GO" id="GO:0015031">
    <property type="term" value="P:protein transport"/>
    <property type="evidence" value="ECO:0007669"/>
    <property type="project" value="UniProtKB-UniRule"/>
</dbReference>
<dbReference type="GO" id="GO:0043335">
    <property type="term" value="P:protein unfolding"/>
    <property type="evidence" value="ECO:0007669"/>
    <property type="project" value="TreeGrafter"/>
</dbReference>
<dbReference type="Gene3D" id="3.10.50.40">
    <property type="match status" value="1"/>
</dbReference>
<dbReference type="Gene3D" id="3.30.70.1050">
    <property type="entry name" value="Trigger factor ribosome-binding domain"/>
    <property type="match status" value="1"/>
</dbReference>
<dbReference type="Gene3D" id="1.10.3120.10">
    <property type="entry name" value="Trigger factor, C-terminal domain"/>
    <property type="match status" value="1"/>
</dbReference>
<dbReference type="HAMAP" id="MF_00303">
    <property type="entry name" value="Trigger_factor_Tig"/>
    <property type="match status" value="1"/>
</dbReference>
<dbReference type="InterPro" id="IPR046357">
    <property type="entry name" value="PPIase_dom_sf"/>
</dbReference>
<dbReference type="InterPro" id="IPR005215">
    <property type="entry name" value="Trig_fac"/>
</dbReference>
<dbReference type="InterPro" id="IPR008880">
    <property type="entry name" value="Trigger_fac_C"/>
</dbReference>
<dbReference type="InterPro" id="IPR037041">
    <property type="entry name" value="Trigger_fac_C_sf"/>
</dbReference>
<dbReference type="InterPro" id="IPR008881">
    <property type="entry name" value="Trigger_fac_ribosome-bd_bac"/>
</dbReference>
<dbReference type="InterPro" id="IPR036611">
    <property type="entry name" value="Trigger_fac_ribosome-bd_sf"/>
</dbReference>
<dbReference type="InterPro" id="IPR027304">
    <property type="entry name" value="Trigger_fact/SurA_dom_sf"/>
</dbReference>
<dbReference type="NCBIfam" id="TIGR00115">
    <property type="entry name" value="tig"/>
    <property type="match status" value="1"/>
</dbReference>
<dbReference type="PANTHER" id="PTHR30560">
    <property type="entry name" value="TRIGGER FACTOR CHAPERONE AND PEPTIDYL-PROLYL CIS/TRANS ISOMERASE"/>
    <property type="match status" value="1"/>
</dbReference>
<dbReference type="PANTHER" id="PTHR30560:SF3">
    <property type="entry name" value="TRIGGER FACTOR-LIKE PROTEIN TIG, CHLOROPLASTIC"/>
    <property type="match status" value="1"/>
</dbReference>
<dbReference type="Pfam" id="PF05698">
    <property type="entry name" value="Trigger_C"/>
    <property type="match status" value="1"/>
</dbReference>
<dbReference type="Pfam" id="PF05697">
    <property type="entry name" value="Trigger_N"/>
    <property type="match status" value="1"/>
</dbReference>
<dbReference type="PIRSF" id="PIRSF003095">
    <property type="entry name" value="Trigger_factor"/>
    <property type="match status" value="1"/>
</dbReference>
<dbReference type="SUPFAM" id="SSF54534">
    <property type="entry name" value="FKBP-like"/>
    <property type="match status" value="1"/>
</dbReference>
<dbReference type="SUPFAM" id="SSF109998">
    <property type="entry name" value="Triger factor/SurA peptide-binding domain-like"/>
    <property type="match status" value="1"/>
</dbReference>
<dbReference type="SUPFAM" id="SSF102735">
    <property type="entry name" value="Trigger factor ribosome-binding domain"/>
    <property type="match status" value="1"/>
</dbReference>
<proteinExistence type="inferred from homology"/>